<keyword id="KW-0963">Cytoplasm</keyword>
<keyword id="KW-0448">Lipopolysaccharide biosynthesis</keyword>
<keyword id="KW-1185">Reference proteome</keyword>
<keyword id="KW-0808">Transferase</keyword>
<protein>
    <recommendedName>
        <fullName>2-dehydro-3-deoxyphosphooctonate aldolase</fullName>
        <ecNumber>2.5.1.55</ecNumber>
    </recommendedName>
    <alternativeName>
        <fullName>3-deoxy-D-manno-octulosonic acid 8-phosphate synthase</fullName>
    </alternativeName>
    <alternativeName>
        <fullName>KDO-8-phosphate synthase</fullName>
        <shortName>KDO 8-P synthase</shortName>
        <shortName>KDOPS</shortName>
    </alternativeName>
    <alternativeName>
        <fullName>Phospho-2-dehydro-3-deoxyoctonate aldolase</fullName>
    </alternativeName>
</protein>
<comment type="catalytic activity">
    <reaction>
        <text>D-arabinose 5-phosphate + phosphoenolpyruvate + H2O = 3-deoxy-alpha-D-manno-2-octulosonate-8-phosphate + phosphate</text>
        <dbReference type="Rhea" id="RHEA:14053"/>
        <dbReference type="ChEBI" id="CHEBI:15377"/>
        <dbReference type="ChEBI" id="CHEBI:43474"/>
        <dbReference type="ChEBI" id="CHEBI:57693"/>
        <dbReference type="ChEBI" id="CHEBI:58702"/>
        <dbReference type="ChEBI" id="CHEBI:85985"/>
        <dbReference type="EC" id="2.5.1.55"/>
    </reaction>
</comment>
<comment type="pathway">
    <text>Carbohydrate biosynthesis; 3-deoxy-D-manno-octulosonate biosynthesis; 3-deoxy-D-manno-octulosonate from D-ribulose 5-phosphate: step 2/3.</text>
</comment>
<comment type="pathway">
    <text>Bacterial outer membrane biogenesis; lipopolysaccharide biosynthesis.</text>
</comment>
<comment type="subcellular location">
    <subcellularLocation>
        <location evidence="1">Cytoplasm</location>
    </subcellularLocation>
</comment>
<comment type="similarity">
    <text evidence="2">Belongs to the KdsA family.</text>
</comment>
<sequence length="284" mass="30949">MQNKVIRLGEIEISNDKPFVLFGGMNVLESRDMAMQVCEAYVKVTEKLGVPYVFKASFDKANRSSIHSYRGPGMEQGLKIFQELKDTFGVKLITDVHEIYQCQPVAEVVDIIQLPAFLARQTDLVAAMAKTGAIINVKKPQFLSPGQMGNIVEKIEECGNDNVILCDRGTNFGYDNLVVDMLGFSVMKKVSKGCPVIFDVTHALQCRDPFGAASGGRRGQVTELARAGMAVGLAGLFLEAHPNPSQAKCDGPSALPLSALEGFVHQMKAIDDLVKHFPELDTAN</sequence>
<name>KDSA_PASMU</name>
<dbReference type="EC" id="2.5.1.55"/>
<dbReference type="EMBL" id="AE004439">
    <property type="protein sequence ID" value="AAK02642.1"/>
    <property type="molecule type" value="Genomic_DNA"/>
</dbReference>
<dbReference type="RefSeq" id="WP_005722043.1">
    <property type="nucleotide sequence ID" value="NC_002663.1"/>
</dbReference>
<dbReference type="SMR" id="P57853"/>
<dbReference type="STRING" id="272843.PM0558"/>
<dbReference type="EnsemblBacteria" id="AAK02642">
    <property type="protein sequence ID" value="AAK02642"/>
    <property type="gene ID" value="PM0558"/>
</dbReference>
<dbReference type="KEGG" id="pmu:PM0558"/>
<dbReference type="HOGENOM" id="CLU_036666_0_0_6"/>
<dbReference type="OrthoDB" id="9776934at2"/>
<dbReference type="UniPathway" id="UPA00030"/>
<dbReference type="UniPathway" id="UPA00357">
    <property type="reaction ID" value="UER00474"/>
</dbReference>
<dbReference type="Proteomes" id="UP000000809">
    <property type="component" value="Chromosome"/>
</dbReference>
<dbReference type="GO" id="GO:0005737">
    <property type="term" value="C:cytoplasm"/>
    <property type="evidence" value="ECO:0007669"/>
    <property type="project" value="UniProtKB-SubCell"/>
</dbReference>
<dbReference type="GO" id="GO:0008676">
    <property type="term" value="F:3-deoxy-8-phosphooctulonate synthase activity"/>
    <property type="evidence" value="ECO:0007669"/>
    <property type="project" value="UniProtKB-UniRule"/>
</dbReference>
<dbReference type="GO" id="GO:0019294">
    <property type="term" value="P:keto-3-deoxy-D-manno-octulosonic acid biosynthetic process"/>
    <property type="evidence" value="ECO:0007669"/>
    <property type="project" value="UniProtKB-UniRule"/>
</dbReference>
<dbReference type="FunFam" id="3.20.20.70:FF:000058">
    <property type="entry name" value="2-dehydro-3-deoxyphosphooctonate aldolase"/>
    <property type="match status" value="1"/>
</dbReference>
<dbReference type="Gene3D" id="3.20.20.70">
    <property type="entry name" value="Aldolase class I"/>
    <property type="match status" value="1"/>
</dbReference>
<dbReference type="HAMAP" id="MF_00056">
    <property type="entry name" value="KDO8P_synth"/>
    <property type="match status" value="1"/>
</dbReference>
<dbReference type="InterPro" id="IPR013785">
    <property type="entry name" value="Aldolase_TIM"/>
</dbReference>
<dbReference type="InterPro" id="IPR006218">
    <property type="entry name" value="DAHP1/KDSA"/>
</dbReference>
<dbReference type="InterPro" id="IPR006269">
    <property type="entry name" value="KDO8P_synthase"/>
</dbReference>
<dbReference type="NCBIfam" id="TIGR01362">
    <property type="entry name" value="KDO8P_synth"/>
    <property type="match status" value="1"/>
</dbReference>
<dbReference type="NCBIfam" id="NF003543">
    <property type="entry name" value="PRK05198.1"/>
    <property type="match status" value="1"/>
</dbReference>
<dbReference type="NCBIfam" id="NF009109">
    <property type="entry name" value="PRK12457.1"/>
    <property type="match status" value="1"/>
</dbReference>
<dbReference type="PANTHER" id="PTHR21057">
    <property type="entry name" value="PHOSPHO-2-DEHYDRO-3-DEOXYHEPTONATE ALDOLASE"/>
    <property type="match status" value="1"/>
</dbReference>
<dbReference type="Pfam" id="PF00793">
    <property type="entry name" value="DAHP_synth_1"/>
    <property type="match status" value="1"/>
</dbReference>
<dbReference type="SUPFAM" id="SSF51569">
    <property type="entry name" value="Aldolase"/>
    <property type="match status" value="1"/>
</dbReference>
<gene>
    <name type="primary">kdsA</name>
    <name type="ordered locus">PM0558</name>
</gene>
<evidence type="ECO:0000250" key="1"/>
<evidence type="ECO:0000305" key="2"/>
<feature type="chain" id="PRO_0000187146" description="2-dehydro-3-deoxyphosphooctonate aldolase">
    <location>
        <begin position="1"/>
        <end position="284"/>
    </location>
</feature>
<accession>P57853</accession>
<proteinExistence type="inferred from homology"/>
<organism>
    <name type="scientific">Pasteurella multocida (strain Pm70)</name>
    <dbReference type="NCBI Taxonomy" id="272843"/>
    <lineage>
        <taxon>Bacteria</taxon>
        <taxon>Pseudomonadati</taxon>
        <taxon>Pseudomonadota</taxon>
        <taxon>Gammaproteobacteria</taxon>
        <taxon>Pasteurellales</taxon>
        <taxon>Pasteurellaceae</taxon>
        <taxon>Pasteurella</taxon>
    </lineage>
</organism>
<reference key="1">
    <citation type="journal article" date="2001" name="Proc. Natl. Acad. Sci. U.S.A.">
        <title>Complete genomic sequence of Pasteurella multocida Pm70.</title>
        <authorList>
            <person name="May B.J."/>
            <person name="Zhang Q."/>
            <person name="Li L.L."/>
            <person name="Paustian M.L."/>
            <person name="Whittam T.S."/>
            <person name="Kapur V."/>
        </authorList>
    </citation>
    <scope>NUCLEOTIDE SEQUENCE [LARGE SCALE GENOMIC DNA]</scope>
    <source>
        <strain>Pm70</strain>
    </source>
</reference>